<protein>
    <recommendedName>
        <fullName evidence="1">Chaperone protein DnaK</fullName>
    </recommendedName>
    <alternativeName>
        <fullName evidence="1">HSP70</fullName>
    </alternativeName>
    <alternativeName>
        <fullName evidence="1">Heat shock 70 kDa protein</fullName>
    </alternativeName>
    <alternativeName>
        <fullName evidence="1">Heat shock protein 70</fullName>
    </alternativeName>
</protein>
<reference key="1">
    <citation type="submission" date="2008-10" db="EMBL/GenBank/DDBJ databases">
        <title>Genome sequence of Bacillus cereus G9842.</title>
        <authorList>
            <person name="Dodson R.J."/>
            <person name="Durkin A.S."/>
            <person name="Rosovitz M.J."/>
            <person name="Rasko D.A."/>
            <person name="Hoffmaster A."/>
            <person name="Ravel J."/>
            <person name="Sutton G."/>
        </authorList>
    </citation>
    <scope>NUCLEOTIDE SEQUENCE [LARGE SCALE GENOMIC DNA]</scope>
    <source>
        <strain>G9842</strain>
    </source>
</reference>
<organism>
    <name type="scientific">Bacillus cereus (strain G9842)</name>
    <dbReference type="NCBI Taxonomy" id="405531"/>
    <lineage>
        <taxon>Bacteria</taxon>
        <taxon>Bacillati</taxon>
        <taxon>Bacillota</taxon>
        <taxon>Bacilli</taxon>
        <taxon>Bacillales</taxon>
        <taxon>Bacillaceae</taxon>
        <taxon>Bacillus</taxon>
        <taxon>Bacillus cereus group</taxon>
    </lineage>
</organism>
<gene>
    <name evidence="1" type="primary">dnaK</name>
    <name type="ordered locus">BCG9842_B0803</name>
</gene>
<name>DNAK_BACC2</name>
<keyword id="KW-0067">ATP-binding</keyword>
<keyword id="KW-0143">Chaperone</keyword>
<keyword id="KW-0547">Nucleotide-binding</keyword>
<keyword id="KW-0597">Phosphoprotein</keyword>
<keyword id="KW-0346">Stress response</keyword>
<comment type="function">
    <text evidence="1">Acts as a chaperone.</text>
</comment>
<comment type="induction">
    <text evidence="1">By stress conditions e.g. heat shock.</text>
</comment>
<comment type="similarity">
    <text evidence="1">Belongs to the heat shock protein 70 family.</text>
</comment>
<evidence type="ECO:0000255" key="1">
    <source>
        <dbReference type="HAMAP-Rule" id="MF_00332"/>
    </source>
</evidence>
<evidence type="ECO:0000256" key="2">
    <source>
        <dbReference type="SAM" id="MobiDB-lite"/>
    </source>
</evidence>
<sequence>MSKIIGIDLGTTNSCVAVMEGGEPKVIPNPEGNRTTPSVVAFKNEERQVGEVAKRQAITNPNTIMSVKRHMGTDYKVEVEGKDYTPQEISAIILQNLKASAEAYLGETVTKAVITVPAYFNDAERQATKDAGRIAGLEVERIINEPTAAALAYGLEKQDEEQKILVYDLGGGTFDVSILELADGTFEVISTAGDNRLGGDDFDQVIIDHLVAEFKKENNIDLSQDKMALQRLKDAAEKAKKDLSGVTQTQISLPFISAGAAGPLHLELTLTRAKFEELSAGLVERTLEPTRRALKDAGFAPSELDKVILVGGSTRIPAVQEAIKRETGKEPYKGVNPDEVVALGAAVQGGVLTGDVEGVLLLDVTPLSLGIETMGGVFTKLIERNTTIPTSKSQVFSTAADNQPAVDIHVLQGERPMSADNKTLGRFQLTDLPPAPRGIPQIEVTFDIDANGIVNVRAKDLGTSKEQAITIQSSSGLSDEEVERMVQEAEANADADQKRKEEVELRNEADQLVFQTDKVVKDLEGKVDAAEVAKATEAKEALQAAIEKNELEEIRAKKDALQEIVQQLTVKLYEQAQAAAGQAEGAQGAQDAGTKKDNVVDAEFEEVKEDK</sequence>
<dbReference type="EMBL" id="CP001186">
    <property type="protein sequence ID" value="ACK97386.1"/>
    <property type="molecule type" value="Genomic_DNA"/>
</dbReference>
<dbReference type="RefSeq" id="WP_000034701.1">
    <property type="nucleotide sequence ID" value="NC_011772.1"/>
</dbReference>
<dbReference type="SMR" id="B7IYG7"/>
<dbReference type="GeneID" id="72450996"/>
<dbReference type="KEGG" id="bcg:BCG9842_B0803"/>
<dbReference type="HOGENOM" id="CLU_005965_2_4_9"/>
<dbReference type="Proteomes" id="UP000006744">
    <property type="component" value="Chromosome"/>
</dbReference>
<dbReference type="GO" id="GO:0005524">
    <property type="term" value="F:ATP binding"/>
    <property type="evidence" value="ECO:0007669"/>
    <property type="project" value="UniProtKB-UniRule"/>
</dbReference>
<dbReference type="GO" id="GO:0140662">
    <property type="term" value="F:ATP-dependent protein folding chaperone"/>
    <property type="evidence" value="ECO:0007669"/>
    <property type="project" value="InterPro"/>
</dbReference>
<dbReference type="GO" id="GO:0051082">
    <property type="term" value="F:unfolded protein binding"/>
    <property type="evidence" value="ECO:0007669"/>
    <property type="project" value="InterPro"/>
</dbReference>
<dbReference type="CDD" id="cd10234">
    <property type="entry name" value="ASKHA_NBD_HSP70_DnaK-like"/>
    <property type="match status" value="1"/>
</dbReference>
<dbReference type="FunFam" id="2.60.34.10:FF:000014">
    <property type="entry name" value="Chaperone protein DnaK HSP70"/>
    <property type="match status" value="1"/>
</dbReference>
<dbReference type="FunFam" id="1.20.1270.10:FF:000004">
    <property type="entry name" value="Molecular chaperone DnaK"/>
    <property type="match status" value="1"/>
</dbReference>
<dbReference type="FunFam" id="3.30.420.40:FF:000071">
    <property type="entry name" value="Molecular chaperone DnaK"/>
    <property type="match status" value="1"/>
</dbReference>
<dbReference type="FunFam" id="3.90.640.10:FF:000003">
    <property type="entry name" value="Molecular chaperone DnaK"/>
    <property type="match status" value="1"/>
</dbReference>
<dbReference type="Gene3D" id="1.20.1270.10">
    <property type="match status" value="1"/>
</dbReference>
<dbReference type="Gene3D" id="3.30.420.40">
    <property type="match status" value="2"/>
</dbReference>
<dbReference type="Gene3D" id="3.90.640.10">
    <property type="entry name" value="Actin, Chain A, domain 4"/>
    <property type="match status" value="1"/>
</dbReference>
<dbReference type="Gene3D" id="2.60.34.10">
    <property type="entry name" value="Substrate Binding Domain Of DNAk, Chain A, domain 1"/>
    <property type="match status" value="1"/>
</dbReference>
<dbReference type="HAMAP" id="MF_00332">
    <property type="entry name" value="DnaK"/>
    <property type="match status" value="1"/>
</dbReference>
<dbReference type="InterPro" id="IPR043129">
    <property type="entry name" value="ATPase_NBD"/>
</dbReference>
<dbReference type="InterPro" id="IPR012725">
    <property type="entry name" value="Chaperone_DnaK"/>
</dbReference>
<dbReference type="InterPro" id="IPR018181">
    <property type="entry name" value="Heat_shock_70_CS"/>
</dbReference>
<dbReference type="InterPro" id="IPR029048">
    <property type="entry name" value="HSP70_C_sf"/>
</dbReference>
<dbReference type="InterPro" id="IPR029047">
    <property type="entry name" value="HSP70_peptide-bd_sf"/>
</dbReference>
<dbReference type="InterPro" id="IPR013126">
    <property type="entry name" value="Hsp_70_fam"/>
</dbReference>
<dbReference type="NCBIfam" id="NF001413">
    <property type="entry name" value="PRK00290.1"/>
    <property type="match status" value="1"/>
</dbReference>
<dbReference type="NCBIfam" id="TIGR02350">
    <property type="entry name" value="prok_dnaK"/>
    <property type="match status" value="1"/>
</dbReference>
<dbReference type="PANTHER" id="PTHR19375">
    <property type="entry name" value="HEAT SHOCK PROTEIN 70KDA"/>
    <property type="match status" value="1"/>
</dbReference>
<dbReference type="Pfam" id="PF00012">
    <property type="entry name" value="HSP70"/>
    <property type="match status" value="1"/>
</dbReference>
<dbReference type="PRINTS" id="PR00301">
    <property type="entry name" value="HEATSHOCK70"/>
</dbReference>
<dbReference type="SUPFAM" id="SSF53067">
    <property type="entry name" value="Actin-like ATPase domain"/>
    <property type="match status" value="2"/>
</dbReference>
<dbReference type="SUPFAM" id="SSF100934">
    <property type="entry name" value="Heat shock protein 70kD (HSP70), C-terminal subdomain"/>
    <property type="match status" value="1"/>
</dbReference>
<dbReference type="SUPFAM" id="SSF100920">
    <property type="entry name" value="Heat shock protein 70kD (HSP70), peptide-binding domain"/>
    <property type="match status" value="1"/>
</dbReference>
<dbReference type="PROSITE" id="PS00297">
    <property type="entry name" value="HSP70_1"/>
    <property type="match status" value="1"/>
</dbReference>
<dbReference type="PROSITE" id="PS00329">
    <property type="entry name" value="HSP70_2"/>
    <property type="match status" value="1"/>
</dbReference>
<dbReference type="PROSITE" id="PS01036">
    <property type="entry name" value="HSP70_3"/>
    <property type="match status" value="1"/>
</dbReference>
<accession>B7IYG7</accession>
<proteinExistence type="inferred from homology"/>
<feature type="chain" id="PRO_1000119666" description="Chaperone protein DnaK">
    <location>
        <begin position="1"/>
        <end position="611"/>
    </location>
</feature>
<feature type="region of interest" description="Disordered" evidence="2">
    <location>
        <begin position="577"/>
        <end position="611"/>
    </location>
</feature>
<feature type="compositionally biased region" description="Low complexity" evidence="2">
    <location>
        <begin position="577"/>
        <end position="592"/>
    </location>
</feature>
<feature type="compositionally biased region" description="Acidic residues" evidence="2">
    <location>
        <begin position="600"/>
        <end position="611"/>
    </location>
</feature>
<feature type="modified residue" description="Phosphothreonine; by autocatalysis" evidence="1">
    <location>
        <position position="173"/>
    </location>
</feature>